<keyword id="KW-0027">Amidation</keyword>
<keyword id="KW-0165">Cleavage on pair of basic residues</keyword>
<keyword id="KW-1015">Disulfide bond</keyword>
<keyword id="KW-0960">Knottin</keyword>
<keyword id="KW-0528">Neurotoxin</keyword>
<keyword id="KW-0964">Secreted</keyword>
<keyword id="KW-0732">Signal</keyword>
<keyword id="KW-0800">Toxin</keyword>
<feature type="signal peptide" evidence="2">
    <location>
        <begin position="1"/>
        <end position="20"/>
    </location>
</feature>
<feature type="propeptide" id="PRO_0000404848" evidence="1">
    <location>
        <begin position="21"/>
        <end position="44"/>
    </location>
</feature>
<feature type="peptide" id="PRO_0000404849" description="Conotoxin ArMSGL-0123">
    <location>
        <begin position="47"/>
        <end position="78"/>
    </location>
</feature>
<feature type="modified residue" description="Leucine amide" evidence="1">
    <location>
        <position position="78"/>
    </location>
</feature>
<feature type="disulfide bond" evidence="1">
    <location>
        <begin position="52"/>
        <end position="64"/>
    </location>
</feature>
<feature type="disulfide bond" evidence="1">
    <location>
        <begin position="56"/>
        <end position="73"/>
    </location>
</feature>
<feature type="disulfide bond" evidence="1">
    <location>
        <begin position="63"/>
        <end position="77"/>
    </location>
</feature>
<evidence type="ECO:0000250" key="1"/>
<evidence type="ECO:0000255" key="2"/>
<evidence type="ECO:0000305" key="3"/>
<organism>
    <name type="scientific">Conus arenatus</name>
    <name type="common">Sand-dusted cone</name>
    <dbReference type="NCBI Taxonomy" id="89451"/>
    <lineage>
        <taxon>Eukaryota</taxon>
        <taxon>Metazoa</taxon>
        <taxon>Spiralia</taxon>
        <taxon>Lophotrochozoa</taxon>
        <taxon>Mollusca</taxon>
        <taxon>Gastropoda</taxon>
        <taxon>Caenogastropoda</taxon>
        <taxon>Neogastropoda</taxon>
        <taxon>Conoidea</taxon>
        <taxon>Conidae</taxon>
        <taxon>Conus</taxon>
    </lineage>
</organism>
<accession>Q9BP70</accession>
<protein>
    <recommendedName>
        <fullName>Conotoxin ArMSGL-0123</fullName>
    </recommendedName>
</protein>
<proteinExistence type="evidence at transcript level"/>
<reference key="1">
    <citation type="journal article" date="2001" name="Mol. Biol. Evol.">
        <title>Mechanisms for evolving hypervariability: the case of conopeptides.</title>
        <authorList>
            <person name="Conticello S.G."/>
            <person name="Gilad Y."/>
            <person name="Avidan N."/>
            <person name="Ben-Asher E."/>
            <person name="Levy Z."/>
            <person name="Fainzilber M."/>
        </authorList>
    </citation>
    <scope>NUCLEOTIDE SEQUENCE [MRNA]</scope>
    <source>
        <tissue>Venom duct</tissue>
    </source>
</reference>
<name>O3622_CONAE</name>
<comment type="subcellular location">
    <subcellularLocation>
        <location evidence="1">Secreted</location>
    </subcellularLocation>
</comment>
<comment type="tissue specificity">
    <text>Expressed by the venom duct.</text>
</comment>
<comment type="domain">
    <text evidence="1">The presence of a 'disulfide through disulfide knot' structurally defines this protein as a knottin.</text>
</comment>
<comment type="domain">
    <text>The cysteine framework is VI/VII (C-C-CC-C-C).</text>
</comment>
<comment type="similarity">
    <text evidence="3">Belongs to the conotoxin O3 superfamily.</text>
</comment>
<dbReference type="EMBL" id="AF215068">
    <property type="protein sequence ID" value="AAG60496.1"/>
    <property type="molecule type" value="mRNA"/>
</dbReference>
<dbReference type="ConoServer" id="755">
    <property type="toxin name" value="Ar6.22 precursor"/>
</dbReference>
<dbReference type="GO" id="GO:0005576">
    <property type="term" value="C:extracellular region"/>
    <property type="evidence" value="ECO:0007669"/>
    <property type="project" value="UniProtKB-SubCell"/>
</dbReference>
<dbReference type="GO" id="GO:0008200">
    <property type="term" value="F:ion channel inhibitor activity"/>
    <property type="evidence" value="ECO:0007669"/>
    <property type="project" value="InterPro"/>
</dbReference>
<dbReference type="GO" id="GO:0090729">
    <property type="term" value="F:toxin activity"/>
    <property type="evidence" value="ECO:0007669"/>
    <property type="project" value="UniProtKB-KW"/>
</dbReference>
<dbReference type="InterPro" id="IPR004214">
    <property type="entry name" value="Conotoxin"/>
</dbReference>
<dbReference type="Pfam" id="PF02950">
    <property type="entry name" value="Conotoxin"/>
    <property type="match status" value="1"/>
</dbReference>
<sequence>MSRLGIMVLTLLLLVFIVTSHQDAGEKQATKRAAVNFRWRRSFTRRAAAEECEEYCEEEEKTCCGEEDGEPVCAEFCLG</sequence>